<protein>
    <recommendedName>
        <fullName evidence="1">Cation-efflux pump FieF</fullName>
    </recommendedName>
</protein>
<dbReference type="EMBL" id="CU928160">
    <property type="protein sequence ID" value="CAR00891.1"/>
    <property type="molecule type" value="Genomic_DNA"/>
</dbReference>
<dbReference type="RefSeq" id="WP_001076742.1">
    <property type="nucleotide sequence ID" value="NC_011741.1"/>
</dbReference>
<dbReference type="SMR" id="B7M6W6"/>
<dbReference type="GeneID" id="75204588"/>
<dbReference type="KEGG" id="ecr:ECIAI1_4120"/>
<dbReference type="HOGENOM" id="CLU_013430_3_0_6"/>
<dbReference type="GO" id="GO:0005886">
    <property type="term" value="C:plasma membrane"/>
    <property type="evidence" value="ECO:0007669"/>
    <property type="project" value="UniProtKB-SubCell"/>
</dbReference>
<dbReference type="GO" id="GO:0015086">
    <property type="term" value="F:cadmium ion transmembrane transporter activity"/>
    <property type="evidence" value="ECO:0007669"/>
    <property type="project" value="UniProtKB-UniRule"/>
</dbReference>
<dbReference type="GO" id="GO:0015093">
    <property type="term" value="F:ferrous iron transmembrane transporter activity"/>
    <property type="evidence" value="ECO:0007669"/>
    <property type="project" value="TreeGrafter"/>
</dbReference>
<dbReference type="GO" id="GO:0046872">
    <property type="term" value="F:metal ion binding"/>
    <property type="evidence" value="ECO:0007669"/>
    <property type="project" value="UniProtKB-KW"/>
</dbReference>
<dbReference type="GO" id="GO:0015341">
    <property type="term" value="F:zinc efflux antiporter activity"/>
    <property type="evidence" value="ECO:0007669"/>
    <property type="project" value="TreeGrafter"/>
</dbReference>
<dbReference type="GO" id="GO:0006882">
    <property type="term" value="P:intracellular zinc ion homeostasis"/>
    <property type="evidence" value="ECO:0007669"/>
    <property type="project" value="TreeGrafter"/>
</dbReference>
<dbReference type="FunFam" id="1.20.1510.10:FF:000001">
    <property type="entry name" value="Ferrous-iron efflux pump FieF"/>
    <property type="match status" value="1"/>
</dbReference>
<dbReference type="FunFam" id="3.30.70.1350:FF:000002">
    <property type="entry name" value="Ferrous-iron efflux pump FieF"/>
    <property type="match status" value="1"/>
</dbReference>
<dbReference type="Gene3D" id="1.20.1510.10">
    <property type="entry name" value="Cation efflux protein transmembrane domain"/>
    <property type="match status" value="1"/>
</dbReference>
<dbReference type="Gene3D" id="3.30.70.1350">
    <property type="entry name" value="Cation efflux protein, cytoplasmic domain"/>
    <property type="match status" value="1"/>
</dbReference>
<dbReference type="HAMAP" id="MF_01425">
    <property type="entry name" value="Cation_efflux_FieF"/>
    <property type="match status" value="1"/>
</dbReference>
<dbReference type="InterPro" id="IPR002524">
    <property type="entry name" value="Cation_efflux"/>
</dbReference>
<dbReference type="InterPro" id="IPR027470">
    <property type="entry name" value="Cation_efflux_CTD"/>
</dbReference>
<dbReference type="InterPro" id="IPR036837">
    <property type="entry name" value="Cation_efflux_CTD_sf"/>
</dbReference>
<dbReference type="InterPro" id="IPR023783">
    <property type="entry name" value="Cation_efflux_FieF"/>
</dbReference>
<dbReference type="InterPro" id="IPR027469">
    <property type="entry name" value="Cation_efflux_TMD_sf"/>
</dbReference>
<dbReference type="InterPro" id="IPR050291">
    <property type="entry name" value="CDF_Transporter"/>
</dbReference>
<dbReference type="NCBIfam" id="TIGR01297">
    <property type="entry name" value="CDF"/>
    <property type="match status" value="1"/>
</dbReference>
<dbReference type="NCBIfam" id="NF007064">
    <property type="entry name" value="PRK09509.1"/>
    <property type="match status" value="1"/>
</dbReference>
<dbReference type="PANTHER" id="PTHR43840:SF41">
    <property type="entry name" value="CATION-EFFLUX PUMP FIEF"/>
    <property type="match status" value="1"/>
</dbReference>
<dbReference type="PANTHER" id="PTHR43840">
    <property type="entry name" value="MITOCHONDRIAL METAL TRANSPORTER 1-RELATED"/>
    <property type="match status" value="1"/>
</dbReference>
<dbReference type="Pfam" id="PF01545">
    <property type="entry name" value="Cation_efflux"/>
    <property type="match status" value="1"/>
</dbReference>
<dbReference type="Pfam" id="PF16916">
    <property type="entry name" value="ZT_dimer"/>
    <property type="match status" value="1"/>
</dbReference>
<dbReference type="SUPFAM" id="SSF160240">
    <property type="entry name" value="Cation efflux protein cytoplasmic domain-like"/>
    <property type="match status" value="1"/>
</dbReference>
<dbReference type="SUPFAM" id="SSF161111">
    <property type="entry name" value="Cation efflux protein transmembrane domain-like"/>
    <property type="match status" value="1"/>
</dbReference>
<accession>B7M6W6</accession>
<reference key="1">
    <citation type="journal article" date="2009" name="PLoS Genet.">
        <title>Organised genome dynamics in the Escherichia coli species results in highly diverse adaptive paths.</title>
        <authorList>
            <person name="Touchon M."/>
            <person name="Hoede C."/>
            <person name="Tenaillon O."/>
            <person name="Barbe V."/>
            <person name="Baeriswyl S."/>
            <person name="Bidet P."/>
            <person name="Bingen E."/>
            <person name="Bonacorsi S."/>
            <person name="Bouchier C."/>
            <person name="Bouvet O."/>
            <person name="Calteau A."/>
            <person name="Chiapello H."/>
            <person name="Clermont O."/>
            <person name="Cruveiller S."/>
            <person name="Danchin A."/>
            <person name="Diard M."/>
            <person name="Dossat C."/>
            <person name="Karoui M.E."/>
            <person name="Frapy E."/>
            <person name="Garry L."/>
            <person name="Ghigo J.M."/>
            <person name="Gilles A.M."/>
            <person name="Johnson J."/>
            <person name="Le Bouguenec C."/>
            <person name="Lescat M."/>
            <person name="Mangenot S."/>
            <person name="Martinez-Jehanne V."/>
            <person name="Matic I."/>
            <person name="Nassif X."/>
            <person name="Oztas S."/>
            <person name="Petit M.A."/>
            <person name="Pichon C."/>
            <person name="Rouy Z."/>
            <person name="Ruf C.S."/>
            <person name="Schneider D."/>
            <person name="Tourret J."/>
            <person name="Vacherie B."/>
            <person name="Vallenet D."/>
            <person name="Medigue C."/>
            <person name="Rocha E.P.C."/>
            <person name="Denamur E."/>
        </authorList>
    </citation>
    <scope>NUCLEOTIDE SEQUENCE [LARGE SCALE GENOMIC DNA]</scope>
    <source>
        <strain>IAI1</strain>
    </source>
</reference>
<name>FIEF_ECO8A</name>
<evidence type="ECO:0000255" key="1">
    <source>
        <dbReference type="HAMAP-Rule" id="MF_01425"/>
    </source>
</evidence>
<comment type="function">
    <text evidence="1">Divalent metal cation transporter which exports Zn(2+), Cd(2+) and possibly Fe(2+). May be involved in zinc and iron detoxification by efflux.</text>
</comment>
<comment type="catalytic activity">
    <reaction evidence="1">
        <text>Zn(2+)(in) + H(+)(out) = Zn(2+)(out) + H(+)(in)</text>
        <dbReference type="Rhea" id="RHEA:28839"/>
        <dbReference type="ChEBI" id="CHEBI:15378"/>
        <dbReference type="ChEBI" id="CHEBI:29105"/>
    </reaction>
</comment>
<comment type="catalytic activity">
    <reaction evidence="1">
        <text>Cd(2+)(in) + H(+)(out) = Cd(2+)(out) + H(+)(in)</text>
        <dbReference type="Rhea" id="RHEA:28739"/>
        <dbReference type="ChEBI" id="CHEBI:15378"/>
        <dbReference type="ChEBI" id="CHEBI:48775"/>
    </reaction>
</comment>
<comment type="catalytic activity">
    <reaction evidence="1">
        <text>Fe(2+)(in) + H(+)(out) = Fe(2+)(out) + H(+)(in)</text>
        <dbReference type="Rhea" id="RHEA:29439"/>
        <dbReference type="ChEBI" id="CHEBI:15378"/>
        <dbReference type="ChEBI" id="CHEBI:29033"/>
    </reaction>
</comment>
<comment type="subunit">
    <text evidence="1">Homodimer.</text>
</comment>
<comment type="subcellular location">
    <subcellularLocation>
        <location evidence="1">Cell inner membrane</location>
        <topology evidence="1">Multi-pass membrane protein</topology>
    </subcellularLocation>
</comment>
<comment type="similarity">
    <text evidence="1">Belongs to the cation diffusion facilitator (CDF) transporter (TC 2.A.4) family. FieF subfamily.</text>
</comment>
<gene>
    <name evidence="1" type="primary">fieF</name>
    <name type="ordered locus">ECIAI1_4120</name>
</gene>
<organism>
    <name type="scientific">Escherichia coli O8 (strain IAI1)</name>
    <dbReference type="NCBI Taxonomy" id="585034"/>
    <lineage>
        <taxon>Bacteria</taxon>
        <taxon>Pseudomonadati</taxon>
        <taxon>Pseudomonadota</taxon>
        <taxon>Gammaproteobacteria</taxon>
        <taxon>Enterobacterales</taxon>
        <taxon>Enterobacteriaceae</taxon>
        <taxon>Escherichia</taxon>
    </lineage>
</organism>
<sequence>MNQSYGRLVSRAAIAATAMASLLLLIKIFAWWYTGSVSILAALVDSLVDIGASLTNLLVVRYSLQPADDNHSFGHGKAESLAALAQSMFISGSALFLFLTGIQHLISPTPMTDPGVGVIVTIVALICTIILVSFQRWVVRRTQSQAVRADMLHYQSDVMMNGAILLALGLSWYGWHRADALFALGIGIYILYSALRMGYEAVQSLLDRALPDEERQEIIDIVTSWPGVSGAHDLRTRQSGPTRFIQIHLEMEDSLPLVQAHMVADQVEQAILRRFPGSDVIIHQDPCSVVPREGKRSMLS</sequence>
<feature type="chain" id="PRO_1000145692" description="Cation-efflux pump FieF">
    <location>
        <begin position="1"/>
        <end position="300"/>
    </location>
</feature>
<feature type="transmembrane region" description="Helical" evidence="1">
    <location>
        <begin position="12"/>
        <end position="32"/>
    </location>
</feature>
<feature type="transmembrane region" description="Helical" evidence="1">
    <location>
        <begin position="39"/>
        <end position="59"/>
    </location>
</feature>
<feature type="transmembrane region" description="Helical" evidence="1">
    <location>
        <begin position="82"/>
        <end position="102"/>
    </location>
</feature>
<feature type="transmembrane region" description="Helical" evidence="1">
    <location>
        <begin position="114"/>
        <end position="134"/>
    </location>
</feature>
<feature type="transmembrane region" description="Helical" evidence="1">
    <location>
        <begin position="156"/>
        <end position="176"/>
    </location>
</feature>
<feature type="transmembrane region" description="Helical" evidence="1">
    <location>
        <begin position="178"/>
        <end position="198"/>
    </location>
</feature>
<feature type="binding site" evidence="1">
    <location>
        <position position="45"/>
    </location>
    <ligand>
        <name>Zn(2+)</name>
        <dbReference type="ChEBI" id="CHEBI:29105"/>
    </ligand>
</feature>
<feature type="binding site" evidence="1">
    <location>
        <position position="49"/>
    </location>
    <ligand>
        <name>Zn(2+)</name>
        <dbReference type="ChEBI" id="CHEBI:29105"/>
    </ligand>
</feature>
<feature type="binding site" evidence="1">
    <location>
        <position position="153"/>
    </location>
    <ligand>
        <name>Zn(2+)</name>
        <dbReference type="ChEBI" id="CHEBI:29105"/>
    </ligand>
</feature>
<feature type="binding site" evidence="1">
    <location>
        <position position="157"/>
    </location>
    <ligand>
        <name>Zn(2+)</name>
        <dbReference type="ChEBI" id="CHEBI:29105"/>
    </ligand>
</feature>
<proteinExistence type="inferred from homology"/>
<keyword id="KW-0997">Cell inner membrane</keyword>
<keyword id="KW-1003">Cell membrane</keyword>
<keyword id="KW-0406">Ion transport</keyword>
<keyword id="KW-0408">Iron</keyword>
<keyword id="KW-0410">Iron transport</keyword>
<keyword id="KW-0472">Membrane</keyword>
<keyword id="KW-0479">Metal-binding</keyword>
<keyword id="KW-0812">Transmembrane</keyword>
<keyword id="KW-1133">Transmembrane helix</keyword>
<keyword id="KW-0813">Transport</keyword>
<keyword id="KW-0862">Zinc</keyword>
<keyword id="KW-0864">Zinc transport</keyword>